<gene>
    <name evidence="1" type="primary">cmoA</name>
    <name type="ordered locus">CJJ81176_0618</name>
</gene>
<keyword id="KW-0949">S-adenosyl-L-methionine</keyword>
<keyword id="KW-0808">Transferase</keyword>
<feature type="chain" id="PRO_0000314317" description="Carboxy-S-adenosyl-L-methionine synthase">
    <location>
        <begin position="1"/>
        <end position="235"/>
    </location>
</feature>
<feature type="binding site" evidence="1">
    <location>
        <position position="35"/>
    </location>
    <ligand>
        <name>S-adenosyl-L-methionine</name>
        <dbReference type="ChEBI" id="CHEBI:59789"/>
    </ligand>
</feature>
<feature type="binding site" evidence="1">
    <location>
        <begin position="60"/>
        <end position="62"/>
    </location>
    <ligand>
        <name>S-adenosyl-L-methionine</name>
        <dbReference type="ChEBI" id="CHEBI:59789"/>
    </ligand>
</feature>
<feature type="binding site" evidence="1">
    <location>
        <begin position="83"/>
        <end position="84"/>
    </location>
    <ligand>
        <name>S-adenosyl-L-methionine</name>
        <dbReference type="ChEBI" id="CHEBI:59789"/>
    </ligand>
</feature>
<feature type="binding site" evidence="1">
    <location>
        <position position="124"/>
    </location>
    <ligand>
        <name>S-adenosyl-L-methionine</name>
        <dbReference type="ChEBI" id="CHEBI:59789"/>
    </ligand>
</feature>
<feature type="binding site" evidence="1">
    <location>
        <position position="191"/>
    </location>
    <ligand>
        <name>S-adenosyl-L-methionine</name>
        <dbReference type="ChEBI" id="CHEBI:59789"/>
    </ligand>
</feature>
<dbReference type="EC" id="2.1.3.-" evidence="1"/>
<dbReference type="EMBL" id="CP000538">
    <property type="protein sequence ID" value="EAQ73152.1"/>
    <property type="molecule type" value="Genomic_DNA"/>
</dbReference>
<dbReference type="SMR" id="A1VYV0"/>
<dbReference type="KEGG" id="cjj:CJJ81176_0618"/>
<dbReference type="eggNOG" id="COG2890">
    <property type="taxonomic scope" value="Bacteria"/>
</dbReference>
<dbReference type="HOGENOM" id="CLU_078475_0_0_7"/>
<dbReference type="Proteomes" id="UP000000646">
    <property type="component" value="Chromosome"/>
</dbReference>
<dbReference type="GO" id="GO:0016743">
    <property type="term" value="F:carboxyl- or carbamoyltransferase activity"/>
    <property type="evidence" value="ECO:0007669"/>
    <property type="project" value="UniProtKB-UniRule"/>
</dbReference>
<dbReference type="GO" id="GO:1904047">
    <property type="term" value="F:S-adenosyl-L-methionine binding"/>
    <property type="evidence" value="ECO:0007669"/>
    <property type="project" value="UniProtKB-UniRule"/>
</dbReference>
<dbReference type="GO" id="GO:0002098">
    <property type="term" value="P:tRNA wobble uridine modification"/>
    <property type="evidence" value="ECO:0007669"/>
    <property type="project" value="InterPro"/>
</dbReference>
<dbReference type="CDD" id="cd02440">
    <property type="entry name" value="AdoMet_MTases"/>
    <property type="match status" value="1"/>
</dbReference>
<dbReference type="Gene3D" id="3.40.50.150">
    <property type="entry name" value="Vaccinia Virus protein VP39"/>
    <property type="match status" value="1"/>
</dbReference>
<dbReference type="HAMAP" id="MF_01589">
    <property type="entry name" value="Cx_SAM_synthase"/>
    <property type="match status" value="1"/>
</dbReference>
<dbReference type="InterPro" id="IPR005271">
    <property type="entry name" value="CmoA"/>
</dbReference>
<dbReference type="InterPro" id="IPR041698">
    <property type="entry name" value="Methyltransf_25"/>
</dbReference>
<dbReference type="InterPro" id="IPR029063">
    <property type="entry name" value="SAM-dependent_MTases_sf"/>
</dbReference>
<dbReference type="NCBIfam" id="TIGR00740">
    <property type="entry name" value="carboxy-S-adenosyl-L-methionine synthase CmoA"/>
    <property type="match status" value="1"/>
</dbReference>
<dbReference type="PANTHER" id="PTHR43861:SF2">
    <property type="entry name" value="CARBOXY-S-ADENOSYL-L-METHIONINE SYNTHASE"/>
    <property type="match status" value="1"/>
</dbReference>
<dbReference type="PANTHER" id="PTHR43861">
    <property type="entry name" value="TRANS-ACONITATE 2-METHYLTRANSFERASE-RELATED"/>
    <property type="match status" value="1"/>
</dbReference>
<dbReference type="Pfam" id="PF13649">
    <property type="entry name" value="Methyltransf_25"/>
    <property type="match status" value="1"/>
</dbReference>
<dbReference type="PIRSF" id="PIRSF006325">
    <property type="entry name" value="MeTrfase_bac"/>
    <property type="match status" value="1"/>
</dbReference>
<dbReference type="SUPFAM" id="SSF53335">
    <property type="entry name" value="S-adenosyl-L-methionine-dependent methyltransferases"/>
    <property type="match status" value="1"/>
</dbReference>
<protein>
    <recommendedName>
        <fullName evidence="1">Carboxy-S-adenosyl-L-methionine synthase</fullName>
        <shortName evidence="1">Cx-SAM synthase</shortName>
        <ecNumber evidence="1">2.1.3.-</ecNumber>
    </recommendedName>
</protein>
<proteinExistence type="inferred from homology"/>
<organism>
    <name type="scientific">Campylobacter jejuni subsp. jejuni serotype O:23/36 (strain 81-176)</name>
    <dbReference type="NCBI Taxonomy" id="354242"/>
    <lineage>
        <taxon>Bacteria</taxon>
        <taxon>Pseudomonadati</taxon>
        <taxon>Campylobacterota</taxon>
        <taxon>Epsilonproteobacteria</taxon>
        <taxon>Campylobacterales</taxon>
        <taxon>Campylobacteraceae</taxon>
        <taxon>Campylobacter</taxon>
    </lineage>
</organism>
<reference key="1">
    <citation type="submission" date="2006-12" db="EMBL/GenBank/DDBJ databases">
        <authorList>
            <person name="Fouts D.E."/>
            <person name="Nelson K.E."/>
            <person name="Sebastian Y."/>
        </authorList>
    </citation>
    <scope>NUCLEOTIDE SEQUENCE [LARGE SCALE GENOMIC DNA]</scope>
    <source>
        <strain>81-176</strain>
    </source>
</reference>
<accession>A1VYV0</accession>
<evidence type="ECO:0000255" key="1">
    <source>
        <dbReference type="HAMAP-Rule" id="MF_01589"/>
    </source>
</evidence>
<name>CMOA_CAMJJ</name>
<sequence>MKDELFKQSPKKQFEFDKSVASVFDDMINRSVPFYRENLELCGNLLAKILSTNASVCDLGCSSANFLIFLANLRKDFKLFGVDNSASMLEVAKSKAKAYGLDISFFEANLCEFDFFVCDVFVANYTMQFIRPPKRQELLDKIYKNLNSKGILIMSEKILYEDAFLSKNIIELYADYKEKQGYSKFEIAAKREALENVLIPYSQKENLNMLEKAGFKKIESIFKWANFETFIAFKD</sequence>
<comment type="function">
    <text evidence="1">Catalyzes the conversion of S-adenosyl-L-methionine (SAM) to carboxy-S-adenosyl-L-methionine (Cx-SAM).</text>
</comment>
<comment type="catalytic activity">
    <reaction evidence="1">
        <text>prephenate + S-adenosyl-L-methionine = carboxy-S-adenosyl-L-methionine + 3-phenylpyruvate + H2O</text>
        <dbReference type="Rhea" id="RHEA:51692"/>
        <dbReference type="ChEBI" id="CHEBI:15377"/>
        <dbReference type="ChEBI" id="CHEBI:18005"/>
        <dbReference type="ChEBI" id="CHEBI:29934"/>
        <dbReference type="ChEBI" id="CHEBI:59789"/>
        <dbReference type="ChEBI" id="CHEBI:134278"/>
    </reaction>
</comment>
<comment type="subunit">
    <text evidence="1">Homodimer.</text>
</comment>
<comment type="similarity">
    <text evidence="1">Belongs to the class I-like SAM-binding methyltransferase superfamily. Cx-SAM synthase family.</text>
</comment>